<dbReference type="EMBL" id="CP001032">
    <property type="protein sequence ID" value="ACB74759.1"/>
    <property type="molecule type" value="Genomic_DNA"/>
</dbReference>
<dbReference type="RefSeq" id="WP_012374297.1">
    <property type="nucleotide sequence ID" value="NC_010571.1"/>
</dbReference>
<dbReference type="SMR" id="B1ZSR5"/>
<dbReference type="STRING" id="452637.Oter_1475"/>
<dbReference type="KEGG" id="ote:Oter_1475"/>
<dbReference type="eggNOG" id="COG0230">
    <property type="taxonomic scope" value="Bacteria"/>
</dbReference>
<dbReference type="HOGENOM" id="CLU_129938_2_1_0"/>
<dbReference type="OrthoDB" id="9804164at2"/>
<dbReference type="Proteomes" id="UP000007013">
    <property type="component" value="Chromosome"/>
</dbReference>
<dbReference type="GO" id="GO:1990904">
    <property type="term" value="C:ribonucleoprotein complex"/>
    <property type="evidence" value="ECO:0007669"/>
    <property type="project" value="UniProtKB-KW"/>
</dbReference>
<dbReference type="GO" id="GO:0005840">
    <property type="term" value="C:ribosome"/>
    <property type="evidence" value="ECO:0007669"/>
    <property type="project" value="UniProtKB-KW"/>
</dbReference>
<dbReference type="GO" id="GO:0003735">
    <property type="term" value="F:structural constituent of ribosome"/>
    <property type="evidence" value="ECO:0007669"/>
    <property type="project" value="InterPro"/>
</dbReference>
<dbReference type="GO" id="GO:0006412">
    <property type="term" value="P:translation"/>
    <property type="evidence" value="ECO:0007669"/>
    <property type="project" value="UniProtKB-UniRule"/>
</dbReference>
<dbReference type="Gene3D" id="1.10.287.3980">
    <property type="match status" value="1"/>
</dbReference>
<dbReference type="HAMAP" id="MF_00391">
    <property type="entry name" value="Ribosomal_bL34"/>
    <property type="match status" value="1"/>
</dbReference>
<dbReference type="InterPro" id="IPR000271">
    <property type="entry name" value="Ribosomal_bL34"/>
</dbReference>
<dbReference type="NCBIfam" id="TIGR01030">
    <property type="entry name" value="rpmH_bact"/>
    <property type="match status" value="1"/>
</dbReference>
<dbReference type="PANTHER" id="PTHR14503:SF4">
    <property type="entry name" value="LARGE RIBOSOMAL SUBUNIT PROTEIN BL34M"/>
    <property type="match status" value="1"/>
</dbReference>
<dbReference type="PANTHER" id="PTHR14503">
    <property type="entry name" value="MITOCHONDRIAL RIBOSOMAL PROTEIN 34 FAMILY MEMBER"/>
    <property type="match status" value="1"/>
</dbReference>
<dbReference type="Pfam" id="PF00468">
    <property type="entry name" value="Ribosomal_L34"/>
    <property type="match status" value="1"/>
</dbReference>
<evidence type="ECO:0000255" key="1">
    <source>
        <dbReference type="HAMAP-Rule" id="MF_00391"/>
    </source>
</evidence>
<evidence type="ECO:0000305" key="2"/>
<organism>
    <name type="scientific">Opitutus terrae (strain DSM 11246 / JCM 15787 / PB90-1)</name>
    <dbReference type="NCBI Taxonomy" id="452637"/>
    <lineage>
        <taxon>Bacteria</taxon>
        <taxon>Pseudomonadati</taxon>
        <taxon>Verrucomicrobiota</taxon>
        <taxon>Opitutia</taxon>
        <taxon>Opitutales</taxon>
        <taxon>Opitutaceae</taxon>
        <taxon>Opitutus</taxon>
    </lineage>
</organism>
<gene>
    <name evidence="1" type="primary">rpmH</name>
    <name type="ordered locus">Oter_1475</name>
</gene>
<sequence>MKPTFRPHRKKRARKIGYRARMATASGRKVIKSRRLKGRKRLTVV</sequence>
<comment type="similarity">
    <text evidence="1">Belongs to the bacterial ribosomal protein bL34 family.</text>
</comment>
<feature type="chain" id="PRO_1000196080" description="Large ribosomal subunit protein bL34">
    <location>
        <begin position="1"/>
        <end position="45"/>
    </location>
</feature>
<protein>
    <recommendedName>
        <fullName evidence="1">Large ribosomal subunit protein bL34</fullName>
    </recommendedName>
    <alternativeName>
        <fullName evidence="2">50S ribosomal protein L34</fullName>
    </alternativeName>
</protein>
<reference key="1">
    <citation type="journal article" date="2011" name="J. Bacteriol.">
        <title>Genome sequence of the verrucomicrobium Opitutus terrae PB90-1, an abundant inhabitant of rice paddy soil ecosystems.</title>
        <authorList>
            <person name="van Passel M.W."/>
            <person name="Kant R."/>
            <person name="Palva A."/>
            <person name="Copeland A."/>
            <person name="Lucas S."/>
            <person name="Lapidus A."/>
            <person name="Glavina del Rio T."/>
            <person name="Pitluck S."/>
            <person name="Goltsman E."/>
            <person name="Clum A."/>
            <person name="Sun H."/>
            <person name="Schmutz J."/>
            <person name="Larimer F.W."/>
            <person name="Land M.L."/>
            <person name="Hauser L."/>
            <person name="Kyrpides N."/>
            <person name="Mikhailova N."/>
            <person name="Richardson P.P."/>
            <person name="Janssen P.H."/>
            <person name="de Vos W.M."/>
            <person name="Smidt H."/>
        </authorList>
    </citation>
    <scope>NUCLEOTIDE SEQUENCE [LARGE SCALE GENOMIC DNA]</scope>
    <source>
        <strain>DSM 11246 / JCM 15787 / PB90-1</strain>
    </source>
</reference>
<keyword id="KW-1185">Reference proteome</keyword>
<keyword id="KW-0687">Ribonucleoprotein</keyword>
<keyword id="KW-0689">Ribosomal protein</keyword>
<accession>B1ZSR5</accession>
<name>RL34_OPITP</name>
<proteinExistence type="inferred from homology"/>